<comment type="function">
    <text evidence="1">Catalyzes the acyloin condensation reaction between C atoms 2 and 3 of pyruvate and glyceraldehyde 3-phosphate to yield 1-deoxy-D-xylulose-5-phosphate (DXP).</text>
</comment>
<comment type="catalytic activity">
    <reaction evidence="1">
        <text>D-glyceraldehyde 3-phosphate + pyruvate + H(+) = 1-deoxy-D-xylulose 5-phosphate + CO2</text>
        <dbReference type="Rhea" id="RHEA:12605"/>
        <dbReference type="ChEBI" id="CHEBI:15361"/>
        <dbReference type="ChEBI" id="CHEBI:15378"/>
        <dbReference type="ChEBI" id="CHEBI:16526"/>
        <dbReference type="ChEBI" id="CHEBI:57792"/>
        <dbReference type="ChEBI" id="CHEBI:59776"/>
        <dbReference type="EC" id="2.2.1.7"/>
    </reaction>
</comment>
<comment type="cofactor">
    <cofactor evidence="1">
        <name>Mg(2+)</name>
        <dbReference type="ChEBI" id="CHEBI:18420"/>
    </cofactor>
    <text evidence="1">Binds 1 Mg(2+) ion per subunit.</text>
</comment>
<comment type="cofactor">
    <cofactor evidence="1">
        <name>thiamine diphosphate</name>
        <dbReference type="ChEBI" id="CHEBI:58937"/>
    </cofactor>
    <text evidence="1">Binds 1 thiamine pyrophosphate per subunit.</text>
</comment>
<comment type="pathway">
    <text evidence="1">Metabolic intermediate biosynthesis; 1-deoxy-D-xylulose 5-phosphate biosynthesis; 1-deoxy-D-xylulose 5-phosphate from D-glyceraldehyde 3-phosphate and pyruvate: step 1/1.</text>
</comment>
<comment type="subunit">
    <text evidence="1">Homodimer.</text>
</comment>
<comment type="similarity">
    <text evidence="1">Belongs to the transketolase family. DXPS subfamily.</text>
</comment>
<keyword id="KW-0414">Isoprene biosynthesis</keyword>
<keyword id="KW-0460">Magnesium</keyword>
<keyword id="KW-0479">Metal-binding</keyword>
<keyword id="KW-0784">Thiamine biosynthesis</keyword>
<keyword id="KW-0786">Thiamine pyrophosphate</keyword>
<keyword id="KW-0808">Transferase</keyword>
<evidence type="ECO:0000255" key="1">
    <source>
        <dbReference type="HAMAP-Rule" id="MF_00315"/>
    </source>
</evidence>
<feature type="chain" id="PRO_1000119552" description="1-deoxy-D-xylulose-5-phosphate synthase">
    <location>
        <begin position="1"/>
        <end position="630"/>
    </location>
</feature>
<feature type="binding site" evidence="1">
    <location>
        <position position="74"/>
    </location>
    <ligand>
        <name>thiamine diphosphate</name>
        <dbReference type="ChEBI" id="CHEBI:58937"/>
    </ligand>
</feature>
<feature type="binding site" evidence="1">
    <location>
        <begin position="115"/>
        <end position="117"/>
    </location>
    <ligand>
        <name>thiamine diphosphate</name>
        <dbReference type="ChEBI" id="CHEBI:58937"/>
    </ligand>
</feature>
<feature type="binding site" evidence="1">
    <location>
        <position position="146"/>
    </location>
    <ligand>
        <name>Mg(2+)</name>
        <dbReference type="ChEBI" id="CHEBI:18420"/>
    </ligand>
</feature>
<feature type="binding site" evidence="1">
    <location>
        <begin position="147"/>
        <end position="148"/>
    </location>
    <ligand>
        <name>thiamine diphosphate</name>
        <dbReference type="ChEBI" id="CHEBI:58937"/>
    </ligand>
</feature>
<feature type="binding site" evidence="1">
    <location>
        <position position="175"/>
    </location>
    <ligand>
        <name>Mg(2+)</name>
        <dbReference type="ChEBI" id="CHEBI:18420"/>
    </ligand>
</feature>
<feature type="binding site" evidence="1">
    <location>
        <position position="175"/>
    </location>
    <ligand>
        <name>thiamine diphosphate</name>
        <dbReference type="ChEBI" id="CHEBI:58937"/>
    </ligand>
</feature>
<feature type="binding site" evidence="1">
    <location>
        <position position="284"/>
    </location>
    <ligand>
        <name>thiamine diphosphate</name>
        <dbReference type="ChEBI" id="CHEBI:58937"/>
    </ligand>
</feature>
<feature type="binding site" evidence="1">
    <location>
        <position position="364"/>
    </location>
    <ligand>
        <name>thiamine diphosphate</name>
        <dbReference type="ChEBI" id="CHEBI:58937"/>
    </ligand>
</feature>
<gene>
    <name evidence="1" type="primary">dxs</name>
    <name type="ordered locus">Minf_1537</name>
</gene>
<name>DXS_METI4</name>
<protein>
    <recommendedName>
        <fullName evidence="1">1-deoxy-D-xylulose-5-phosphate synthase</fullName>
        <ecNumber evidence="1">2.2.1.7</ecNumber>
    </recommendedName>
    <alternativeName>
        <fullName evidence="1">1-deoxyxylulose-5-phosphate synthase</fullName>
        <shortName evidence="1">DXP synthase</shortName>
        <shortName evidence="1">DXPS</shortName>
    </alternativeName>
</protein>
<accession>B3DW88</accession>
<organism>
    <name type="scientific">Methylacidiphilum infernorum (isolate V4)</name>
    <name type="common">Methylokorus infernorum (strain V4)</name>
    <dbReference type="NCBI Taxonomy" id="481448"/>
    <lineage>
        <taxon>Bacteria</taxon>
        <taxon>Pseudomonadati</taxon>
        <taxon>Verrucomicrobiota</taxon>
        <taxon>Methylacidiphilae</taxon>
        <taxon>Methylacidiphilales</taxon>
        <taxon>Methylacidiphilaceae</taxon>
        <taxon>Methylacidiphilum (ex Ratnadevi et al. 2023)</taxon>
    </lineage>
</organism>
<proteinExistence type="inferred from homology"/>
<dbReference type="EC" id="2.2.1.7" evidence="1"/>
<dbReference type="EMBL" id="CP000975">
    <property type="protein sequence ID" value="ACD83591.1"/>
    <property type="molecule type" value="Genomic_DNA"/>
</dbReference>
<dbReference type="RefSeq" id="WP_012463873.1">
    <property type="nucleotide sequence ID" value="NC_010794.1"/>
</dbReference>
<dbReference type="SMR" id="B3DW88"/>
<dbReference type="STRING" id="481448.Minf_1537"/>
<dbReference type="KEGG" id="min:Minf_1537"/>
<dbReference type="eggNOG" id="COG1154">
    <property type="taxonomic scope" value="Bacteria"/>
</dbReference>
<dbReference type="HOGENOM" id="CLU_009227_1_4_0"/>
<dbReference type="OrthoDB" id="9803371at2"/>
<dbReference type="UniPathway" id="UPA00064">
    <property type="reaction ID" value="UER00091"/>
</dbReference>
<dbReference type="Proteomes" id="UP000009149">
    <property type="component" value="Chromosome"/>
</dbReference>
<dbReference type="GO" id="GO:0005829">
    <property type="term" value="C:cytosol"/>
    <property type="evidence" value="ECO:0007669"/>
    <property type="project" value="TreeGrafter"/>
</dbReference>
<dbReference type="GO" id="GO:0008661">
    <property type="term" value="F:1-deoxy-D-xylulose-5-phosphate synthase activity"/>
    <property type="evidence" value="ECO:0007669"/>
    <property type="project" value="UniProtKB-UniRule"/>
</dbReference>
<dbReference type="GO" id="GO:0000287">
    <property type="term" value="F:magnesium ion binding"/>
    <property type="evidence" value="ECO:0007669"/>
    <property type="project" value="UniProtKB-UniRule"/>
</dbReference>
<dbReference type="GO" id="GO:0030976">
    <property type="term" value="F:thiamine pyrophosphate binding"/>
    <property type="evidence" value="ECO:0007669"/>
    <property type="project" value="UniProtKB-UniRule"/>
</dbReference>
<dbReference type="GO" id="GO:0052865">
    <property type="term" value="P:1-deoxy-D-xylulose 5-phosphate biosynthetic process"/>
    <property type="evidence" value="ECO:0007669"/>
    <property type="project" value="UniProtKB-UniPathway"/>
</dbReference>
<dbReference type="GO" id="GO:0019288">
    <property type="term" value="P:isopentenyl diphosphate biosynthetic process, methylerythritol 4-phosphate pathway"/>
    <property type="evidence" value="ECO:0007669"/>
    <property type="project" value="TreeGrafter"/>
</dbReference>
<dbReference type="GO" id="GO:0016114">
    <property type="term" value="P:terpenoid biosynthetic process"/>
    <property type="evidence" value="ECO:0007669"/>
    <property type="project" value="UniProtKB-UniRule"/>
</dbReference>
<dbReference type="GO" id="GO:0009228">
    <property type="term" value="P:thiamine biosynthetic process"/>
    <property type="evidence" value="ECO:0007669"/>
    <property type="project" value="UniProtKB-UniRule"/>
</dbReference>
<dbReference type="CDD" id="cd02007">
    <property type="entry name" value="TPP_DXS"/>
    <property type="match status" value="1"/>
</dbReference>
<dbReference type="CDD" id="cd07033">
    <property type="entry name" value="TPP_PYR_DXS_TK_like"/>
    <property type="match status" value="1"/>
</dbReference>
<dbReference type="FunFam" id="3.40.50.970:FF:000005">
    <property type="entry name" value="1-deoxy-D-xylulose-5-phosphate synthase"/>
    <property type="match status" value="1"/>
</dbReference>
<dbReference type="Gene3D" id="3.40.50.920">
    <property type="match status" value="1"/>
</dbReference>
<dbReference type="Gene3D" id="3.40.50.970">
    <property type="match status" value="2"/>
</dbReference>
<dbReference type="HAMAP" id="MF_00315">
    <property type="entry name" value="DXP_synth"/>
    <property type="match status" value="1"/>
</dbReference>
<dbReference type="InterPro" id="IPR005477">
    <property type="entry name" value="Dxylulose-5-P_synthase"/>
</dbReference>
<dbReference type="InterPro" id="IPR029061">
    <property type="entry name" value="THDP-binding"/>
</dbReference>
<dbReference type="InterPro" id="IPR009014">
    <property type="entry name" value="Transketo_C/PFOR_II"/>
</dbReference>
<dbReference type="InterPro" id="IPR005475">
    <property type="entry name" value="Transketolase-like_Pyr-bd"/>
</dbReference>
<dbReference type="InterPro" id="IPR020826">
    <property type="entry name" value="Transketolase_BS"/>
</dbReference>
<dbReference type="InterPro" id="IPR033248">
    <property type="entry name" value="Transketolase_C"/>
</dbReference>
<dbReference type="InterPro" id="IPR049557">
    <property type="entry name" value="Transketolase_CS"/>
</dbReference>
<dbReference type="NCBIfam" id="TIGR00204">
    <property type="entry name" value="dxs"/>
    <property type="match status" value="1"/>
</dbReference>
<dbReference type="NCBIfam" id="NF003933">
    <property type="entry name" value="PRK05444.2-2"/>
    <property type="match status" value="1"/>
</dbReference>
<dbReference type="PANTHER" id="PTHR43322">
    <property type="entry name" value="1-D-DEOXYXYLULOSE 5-PHOSPHATE SYNTHASE-RELATED"/>
    <property type="match status" value="1"/>
</dbReference>
<dbReference type="PANTHER" id="PTHR43322:SF5">
    <property type="entry name" value="1-DEOXY-D-XYLULOSE-5-PHOSPHATE SYNTHASE, CHLOROPLASTIC"/>
    <property type="match status" value="1"/>
</dbReference>
<dbReference type="Pfam" id="PF13292">
    <property type="entry name" value="DXP_synthase_N"/>
    <property type="match status" value="1"/>
</dbReference>
<dbReference type="Pfam" id="PF02779">
    <property type="entry name" value="Transket_pyr"/>
    <property type="match status" value="1"/>
</dbReference>
<dbReference type="Pfam" id="PF02780">
    <property type="entry name" value="Transketolase_C"/>
    <property type="match status" value="1"/>
</dbReference>
<dbReference type="SMART" id="SM00861">
    <property type="entry name" value="Transket_pyr"/>
    <property type="match status" value="1"/>
</dbReference>
<dbReference type="SUPFAM" id="SSF52518">
    <property type="entry name" value="Thiamin diphosphate-binding fold (THDP-binding)"/>
    <property type="match status" value="2"/>
</dbReference>
<dbReference type="SUPFAM" id="SSF52922">
    <property type="entry name" value="TK C-terminal domain-like"/>
    <property type="match status" value="1"/>
</dbReference>
<dbReference type="PROSITE" id="PS00801">
    <property type="entry name" value="TRANSKETOLASE_1"/>
    <property type="match status" value="1"/>
</dbReference>
<dbReference type="PROSITE" id="PS00802">
    <property type="entry name" value="TRANSKETOLASE_2"/>
    <property type="match status" value="1"/>
</dbReference>
<reference key="1">
    <citation type="journal article" date="2008" name="Biol. Direct">
        <title>Complete genome sequence of the extremely acidophilic methanotroph isolate V4, Methylacidiphilum infernorum, a representative of the bacterial phylum Verrucomicrobia.</title>
        <authorList>
            <person name="Hou S."/>
            <person name="Makarova K.S."/>
            <person name="Saw J.H."/>
            <person name="Senin P."/>
            <person name="Ly B.V."/>
            <person name="Zhou Z."/>
            <person name="Ren Y."/>
            <person name="Wang J."/>
            <person name="Galperin M.Y."/>
            <person name="Omelchenko M.V."/>
            <person name="Wolf Y.I."/>
            <person name="Yutin N."/>
            <person name="Koonin E.V."/>
            <person name="Stott M.B."/>
            <person name="Mountain B.W."/>
            <person name="Crowe M.A."/>
            <person name="Smirnova A.V."/>
            <person name="Dunfield P.F."/>
            <person name="Feng L."/>
            <person name="Wang L."/>
            <person name="Alam M."/>
        </authorList>
    </citation>
    <scope>NUCLEOTIDE SEQUENCE [LARGE SCALE GENOMIC DNA]</scope>
    <source>
        <strain>Isolate V4</strain>
    </source>
</reference>
<sequence length="630" mass="69902">MEKLLDRIDSPADLKKLQVSELTKLAEEIRQEMITVLSKCGGHLGPNLGVVELTLALHYVFDVPRDHFVFDVSHQAYVHKLITGRKNRFHTIRQHGGISGFMSREESEYDCYGAGHAGTALSAALGMAVARDRRGGKEHVIALCGDAAFTCGITFEALNNVASTTQRLIVILNDNEWSIDKNVGAIASYFNKIVTNPAYSYLRDRVEKVLEKWPGKNVLKVARKAEEAFKSLLWPSVIFEELGLTYHGPIDGHDIARLISTFEFLKNQEYPVLLHVITQKGRGFPPALEKQKKFHGLGPYNPITGETPSSPRKTFSEVFAETMIKLADMNRNVVAITAAMPNGTALDKFQPKFPDRYFDVGIAEEHAVIFAAGMATKGFKPYCAIYSTFLQRAYDPIIHDVCLQKLPVVFCLDRGGLSGDDGPTHHGLFDVAYLRTVPNITIMHPKDEDELADMLFTAMHHPGPVAIRYPRGSGSGVAVKERPELIPIGRAEVIKHGRDVAIFSLGIMVEMGKELAQKLEECGYSAALINPRTVKPFDRGTLEFFARSVDLIVSIEDHVLAGGFGSLILEELQALGLRIPVVRIGWPDKFIEHGKVDILRKKYGITVENALEQSLKILKHPKSDTNLEIA</sequence>